<proteinExistence type="inferred from homology"/>
<evidence type="ECO:0000255" key="1">
    <source>
        <dbReference type="HAMAP-Rule" id="MF_00939"/>
    </source>
</evidence>
<evidence type="ECO:0000256" key="2">
    <source>
        <dbReference type="SAM" id="MobiDB-lite"/>
    </source>
</evidence>
<evidence type="ECO:0000305" key="3"/>
<keyword id="KW-0067">ATP-binding</keyword>
<keyword id="KW-0238">DNA-binding</keyword>
<keyword id="KW-0413">Isomerase</keyword>
<keyword id="KW-0460">Magnesium</keyword>
<keyword id="KW-0479">Metal-binding</keyword>
<keyword id="KW-0547">Nucleotide-binding</keyword>
<keyword id="KW-0799">Topoisomerase</keyword>
<feature type="chain" id="PRO_0000145441" description="DNA topoisomerase 4 subunit B">
    <location>
        <begin position="1"/>
        <end position="664"/>
    </location>
</feature>
<feature type="domain" description="Toprim" evidence="1">
    <location>
        <begin position="424"/>
        <end position="538"/>
    </location>
</feature>
<feature type="region of interest" description="Disordered" evidence="2">
    <location>
        <begin position="386"/>
        <end position="418"/>
    </location>
</feature>
<feature type="compositionally biased region" description="Basic and acidic residues" evidence="2">
    <location>
        <begin position="387"/>
        <end position="398"/>
    </location>
</feature>
<feature type="binding site" evidence="1">
    <location>
        <position position="7"/>
    </location>
    <ligand>
        <name>ATP</name>
        <dbReference type="ChEBI" id="CHEBI:30616"/>
    </ligand>
</feature>
<feature type="binding site" evidence="1">
    <location>
        <position position="47"/>
    </location>
    <ligand>
        <name>ATP</name>
        <dbReference type="ChEBI" id="CHEBI:30616"/>
    </ligand>
</feature>
<feature type="binding site" evidence="1">
    <location>
        <position position="74"/>
    </location>
    <ligand>
        <name>ATP</name>
        <dbReference type="ChEBI" id="CHEBI:30616"/>
    </ligand>
</feature>
<feature type="binding site" evidence="1">
    <location>
        <begin position="114"/>
        <end position="120"/>
    </location>
    <ligand>
        <name>ATP</name>
        <dbReference type="ChEBI" id="CHEBI:30616"/>
    </ligand>
</feature>
<feature type="binding site" evidence="1">
    <location>
        <position position="341"/>
    </location>
    <ligand>
        <name>ATP</name>
        <dbReference type="ChEBI" id="CHEBI:30616"/>
    </ligand>
</feature>
<feature type="binding site" evidence="1">
    <location>
        <position position="430"/>
    </location>
    <ligand>
        <name>Mg(2+)</name>
        <dbReference type="ChEBI" id="CHEBI:18420"/>
        <label>1</label>
        <note>catalytic</note>
    </ligand>
</feature>
<feature type="binding site" evidence="1">
    <location>
        <position position="503"/>
    </location>
    <ligand>
        <name>Mg(2+)</name>
        <dbReference type="ChEBI" id="CHEBI:18420"/>
        <label>1</label>
        <note>catalytic</note>
    </ligand>
</feature>
<feature type="binding site" evidence="1">
    <location>
        <position position="503"/>
    </location>
    <ligand>
        <name>Mg(2+)</name>
        <dbReference type="ChEBI" id="CHEBI:18420"/>
        <label>2</label>
    </ligand>
</feature>
<feature type="binding site" evidence="1">
    <location>
        <position position="505"/>
    </location>
    <ligand>
        <name>Mg(2+)</name>
        <dbReference type="ChEBI" id="CHEBI:18420"/>
        <label>2</label>
    </ligand>
</feature>
<feature type="site" description="Interaction with DNA" evidence="1">
    <location>
        <position position="455"/>
    </location>
</feature>
<feature type="site" description="Interaction with DNA" evidence="1">
    <location>
        <position position="458"/>
    </location>
</feature>
<feature type="site" description="Interaction with DNA" evidence="1">
    <location>
        <position position="510"/>
    </location>
</feature>
<feature type="site" description="Interaction with DNA" evidence="1">
    <location>
        <position position="626"/>
    </location>
</feature>
<gene>
    <name evidence="1" type="primary">parE</name>
    <name type="ordered locus">SE_1036</name>
</gene>
<protein>
    <recommendedName>
        <fullName evidence="1">DNA topoisomerase 4 subunit B</fullName>
        <ecNumber evidence="1">5.6.2.2</ecNumber>
    </recommendedName>
    <alternativeName>
        <fullName evidence="1">Topoisomerase IV subunit B</fullName>
    </alternativeName>
</protein>
<accession>Q8CSN9</accession>
<comment type="function">
    <text evidence="1">Topoisomerase IV is essential for chromosome segregation. It relaxes supercoiled DNA. Performs the decatenation events required during the replication of a circular DNA molecule.</text>
</comment>
<comment type="catalytic activity">
    <reaction evidence="1">
        <text>ATP-dependent breakage, passage and rejoining of double-stranded DNA.</text>
        <dbReference type="EC" id="5.6.2.2"/>
    </reaction>
</comment>
<comment type="cofactor">
    <cofactor evidence="1">
        <name>Mg(2+)</name>
        <dbReference type="ChEBI" id="CHEBI:18420"/>
    </cofactor>
    <cofactor evidence="1">
        <name>Mn(2+)</name>
        <dbReference type="ChEBI" id="CHEBI:29035"/>
    </cofactor>
    <cofactor evidence="1">
        <name>Ca(2+)</name>
        <dbReference type="ChEBI" id="CHEBI:29108"/>
    </cofactor>
    <text evidence="1">Binds two Mg(2+) per subunit. The magnesium ions form salt bridges with both the protein and the DNA. Can also accept other divalent metal cations, such as Mn(2+) or Ca(2+).</text>
</comment>
<comment type="subunit">
    <text evidence="1">Heterotetramer composed of ParC and ParE.</text>
</comment>
<comment type="similarity">
    <text evidence="1">Belongs to the type II topoisomerase family. ParE type 2 subfamily.</text>
</comment>
<comment type="sequence caution" evidence="3">
    <conflict type="erroneous initiation">
        <sequence resource="EMBL-CDS" id="AAO04633"/>
    </conflict>
</comment>
<organism>
    <name type="scientific">Staphylococcus epidermidis (strain ATCC 12228 / FDA PCI 1200)</name>
    <dbReference type="NCBI Taxonomy" id="176280"/>
    <lineage>
        <taxon>Bacteria</taxon>
        <taxon>Bacillati</taxon>
        <taxon>Bacillota</taxon>
        <taxon>Bacilli</taxon>
        <taxon>Bacillales</taxon>
        <taxon>Staphylococcaceae</taxon>
        <taxon>Staphylococcus</taxon>
    </lineage>
</organism>
<name>PARE_STAES</name>
<dbReference type="EC" id="5.6.2.2" evidence="1"/>
<dbReference type="EMBL" id="AE015929">
    <property type="protein sequence ID" value="AAO04633.1"/>
    <property type="status" value="ALT_INIT"/>
    <property type="molecule type" value="Genomic_DNA"/>
</dbReference>
<dbReference type="RefSeq" id="NP_764591.1">
    <property type="nucleotide sequence ID" value="NC_004461.1"/>
</dbReference>
<dbReference type="SMR" id="Q8CSN9"/>
<dbReference type="KEGG" id="sep:SE_1036"/>
<dbReference type="PATRIC" id="fig|176280.10.peg.1011"/>
<dbReference type="eggNOG" id="COG0187">
    <property type="taxonomic scope" value="Bacteria"/>
</dbReference>
<dbReference type="HOGENOM" id="CLU_006146_1_2_9"/>
<dbReference type="OrthoDB" id="9802808at2"/>
<dbReference type="Proteomes" id="UP000001411">
    <property type="component" value="Chromosome"/>
</dbReference>
<dbReference type="GO" id="GO:0005694">
    <property type="term" value="C:chromosome"/>
    <property type="evidence" value="ECO:0007669"/>
    <property type="project" value="InterPro"/>
</dbReference>
<dbReference type="GO" id="GO:0005524">
    <property type="term" value="F:ATP binding"/>
    <property type="evidence" value="ECO:0007669"/>
    <property type="project" value="UniProtKB-UniRule"/>
</dbReference>
<dbReference type="GO" id="GO:0003677">
    <property type="term" value="F:DNA binding"/>
    <property type="evidence" value="ECO:0007669"/>
    <property type="project" value="UniProtKB-UniRule"/>
</dbReference>
<dbReference type="GO" id="GO:0034335">
    <property type="term" value="F:DNA negative supercoiling activity"/>
    <property type="evidence" value="ECO:0007669"/>
    <property type="project" value="UniProtKB-ARBA"/>
</dbReference>
<dbReference type="GO" id="GO:0046872">
    <property type="term" value="F:metal ion binding"/>
    <property type="evidence" value="ECO:0007669"/>
    <property type="project" value="UniProtKB-KW"/>
</dbReference>
<dbReference type="GO" id="GO:0007059">
    <property type="term" value="P:chromosome segregation"/>
    <property type="evidence" value="ECO:0007669"/>
    <property type="project" value="UniProtKB-UniRule"/>
</dbReference>
<dbReference type="GO" id="GO:0006265">
    <property type="term" value="P:DNA topological change"/>
    <property type="evidence" value="ECO:0007669"/>
    <property type="project" value="UniProtKB-UniRule"/>
</dbReference>
<dbReference type="CDD" id="cd16928">
    <property type="entry name" value="HATPase_GyrB-like"/>
    <property type="match status" value="1"/>
</dbReference>
<dbReference type="CDD" id="cd00822">
    <property type="entry name" value="TopoII_Trans_DNA_gyrase"/>
    <property type="match status" value="1"/>
</dbReference>
<dbReference type="FunFam" id="3.30.230.10:FF:000005">
    <property type="entry name" value="DNA gyrase subunit B"/>
    <property type="match status" value="1"/>
</dbReference>
<dbReference type="FunFam" id="3.30.565.10:FF:000002">
    <property type="entry name" value="DNA gyrase subunit B"/>
    <property type="match status" value="1"/>
</dbReference>
<dbReference type="FunFam" id="3.40.50.670:FF:000002">
    <property type="entry name" value="DNA gyrase subunit B"/>
    <property type="match status" value="1"/>
</dbReference>
<dbReference type="Gene3D" id="3.30.230.10">
    <property type="match status" value="1"/>
</dbReference>
<dbReference type="Gene3D" id="3.40.50.670">
    <property type="match status" value="1"/>
</dbReference>
<dbReference type="Gene3D" id="3.30.565.10">
    <property type="entry name" value="Histidine kinase-like ATPase, C-terminal domain"/>
    <property type="match status" value="1"/>
</dbReference>
<dbReference type="HAMAP" id="MF_00939">
    <property type="entry name" value="ParE_type2"/>
    <property type="match status" value="1"/>
</dbReference>
<dbReference type="InterPro" id="IPR002288">
    <property type="entry name" value="DNA_gyrase_B_C"/>
</dbReference>
<dbReference type="InterPro" id="IPR036890">
    <property type="entry name" value="HATPase_C_sf"/>
</dbReference>
<dbReference type="InterPro" id="IPR005740">
    <property type="entry name" value="ParE_type2"/>
</dbReference>
<dbReference type="InterPro" id="IPR020568">
    <property type="entry name" value="Ribosomal_Su5_D2-typ_SF"/>
</dbReference>
<dbReference type="InterPro" id="IPR014721">
    <property type="entry name" value="Ribsml_uS5_D2-typ_fold_subgr"/>
</dbReference>
<dbReference type="InterPro" id="IPR001241">
    <property type="entry name" value="Topo_IIA"/>
</dbReference>
<dbReference type="InterPro" id="IPR013760">
    <property type="entry name" value="Topo_IIA-like_dom_sf"/>
</dbReference>
<dbReference type="InterPro" id="IPR000565">
    <property type="entry name" value="Topo_IIA_B"/>
</dbReference>
<dbReference type="InterPro" id="IPR013759">
    <property type="entry name" value="Topo_IIA_B_C"/>
</dbReference>
<dbReference type="InterPro" id="IPR013506">
    <property type="entry name" value="Topo_IIA_bsu_dom2"/>
</dbReference>
<dbReference type="InterPro" id="IPR018522">
    <property type="entry name" value="TopoIIA_CS"/>
</dbReference>
<dbReference type="InterPro" id="IPR006171">
    <property type="entry name" value="TOPRIM_dom"/>
</dbReference>
<dbReference type="NCBIfam" id="TIGR01058">
    <property type="entry name" value="parE_Gpos"/>
    <property type="match status" value="1"/>
</dbReference>
<dbReference type="NCBIfam" id="NF004189">
    <property type="entry name" value="PRK05644.1"/>
    <property type="match status" value="1"/>
</dbReference>
<dbReference type="PANTHER" id="PTHR45866">
    <property type="entry name" value="DNA GYRASE/TOPOISOMERASE SUBUNIT B"/>
    <property type="match status" value="1"/>
</dbReference>
<dbReference type="PANTHER" id="PTHR45866:SF12">
    <property type="entry name" value="DNA TOPOISOMERASE 4 SUBUNIT B"/>
    <property type="match status" value="1"/>
</dbReference>
<dbReference type="Pfam" id="PF00204">
    <property type="entry name" value="DNA_gyraseB"/>
    <property type="match status" value="1"/>
</dbReference>
<dbReference type="Pfam" id="PF00986">
    <property type="entry name" value="DNA_gyraseB_C"/>
    <property type="match status" value="1"/>
</dbReference>
<dbReference type="Pfam" id="PF02518">
    <property type="entry name" value="HATPase_c"/>
    <property type="match status" value="1"/>
</dbReference>
<dbReference type="Pfam" id="PF01751">
    <property type="entry name" value="Toprim"/>
    <property type="match status" value="1"/>
</dbReference>
<dbReference type="PRINTS" id="PR01159">
    <property type="entry name" value="DNAGYRASEB"/>
</dbReference>
<dbReference type="PRINTS" id="PR00418">
    <property type="entry name" value="TPI2FAMILY"/>
</dbReference>
<dbReference type="SMART" id="SM00387">
    <property type="entry name" value="HATPase_c"/>
    <property type="match status" value="1"/>
</dbReference>
<dbReference type="SMART" id="SM00433">
    <property type="entry name" value="TOP2c"/>
    <property type="match status" value="1"/>
</dbReference>
<dbReference type="SUPFAM" id="SSF55874">
    <property type="entry name" value="ATPase domain of HSP90 chaperone/DNA topoisomerase II/histidine kinase"/>
    <property type="match status" value="1"/>
</dbReference>
<dbReference type="SUPFAM" id="SSF54211">
    <property type="entry name" value="Ribosomal protein S5 domain 2-like"/>
    <property type="match status" value="1"/>
</dbReference>
<dbReference type="SUPFAM" id="SSF56719">
    <property type="entry name" value="Type II DNA topoisomerase"/>
    <property type="match status" value="1"/>
</dbReference>
<dbReference type="PROSITE" id="PS00177">
    <property type="entry name" value="TOPOISOMERASE_II"/>
    <property type="match status" value="1"/>
</dbReference>
<dbReference type="PROSITE" id="PS50880">
    <property type="entry name" value="TOPRIM"/>
    <property type="match status" value="1"/>
</dbReference>
<reference key="1">
    <citation type="journal article" date="2003" name="Mol. Microbiol.">
        <title>Genome-based analysis of virulence genes in a non-biofilm-forming Staphylococcus epidermidis strain (ATCC 12228).</title>
        <authorList>
            <person name="Zhang Y.-Q."/>
            <person name="Ren S.-X."/>
            <person name="Li H.-L."/>
            <person name="Wang Y.-X."/>
            <person name="Fu G."/>
            <person name="Yang J."/>
            <person name="Qin Z.-Q."/>
            <person name="Miao Y.-G."/>
            <person name="Wang W.-Y."/>
            <person name="Chen R.-S."/>
            <person name="Shen Y."/>
            <person name="Chen Z."/>
            <person name="Yuan Z.-H."/>
            <person name="Zhao G.-P."/>
            <person name="Qu D."/>
            <person name="Danchin A."/>
            <person name="Wen Y.-M."/>
        </authorList>
    </citation>
    <scope>NUCLEOTIDE SEQUENCE [LARGE SCALE GENOMIC DNA]</scope>
    <source>
        <strain>ATCC 12228 / FDA PCI 1200</strain>
    </source>
</reference>
<sequence length="664" mass="74470">MNKQNNYSDDSIQVLEGLEAVRKRPGMYIGSTDKRGLHHLVYEVVDNSVDEVLNGYGDAITVTINQDGSISIEDNGRGMPTGIHASGKPTAEVIFTVLHAGGKFGQGGYKTSGGLHGVGASVVNALSEWLEVEIHRDGNIYTQNFKNGGIPATGLVKTGKTKKTGTKVTFKPDSEIFKSTTTFNFDILSERLQESAFLLKDLKITLTDLRSGKEREEIYHYEEGIKEFVSYVNEGKEVLHDVTTFAGHSNGIEVDVAFQYNDQYSESILSFVNNVRTKDGGTHEVGFKTAMTRVFNEYARRINELKDKDKNLDGNDIREGLTAIISVRIPEELLQFEGQTKSKLGTSEARSAVDSVVSEKLPYYLEEKGQLSKSLVKKAIKAQQAREAARKAREDARSGKKNKRKDTLLSGKLTPAQSKNTDKNELYLVEGDSAGGSAKLGRDRKFQAILPLRGKVINTEKARLEDIFKNEEINTIIHTIGAGVGTDFKIEDSNYNRIIIMTDADTDGAHIQVLLLTFFFKYMKPLVQAGRVFIALPPLYKLEKGKGKNKKVEYAWTDEELENLQKQLGKGFILQRYKGLGEMNPEQLWETTMNPETRTLIRVQVEDEVRSSKRVTTLMGDKVAPRREWIEKHVEFGMQEDQSILDNKEVQILENEKYIEEETN</sequence>